<organism>
    <name type="scientific">Bordetella parapertussis (strain 12822 / ATCC BAA-587 / NCTC 13253)</name>
    <dbReference type="NCBI Taxonomy" id="257311"/>
    <lineage>
        <taxon>Bacteria</taxon>
        <taxon>Pseudomonadati</taxon>
        <taxon>Pseudomonadota</taxon>
        <taxon>Betaproteobacteria</taxon>
        <taxon>Burkholderiales</taxon>
        <taxon>Alcaligenaceae</taxon>
        <taxon>Bordetella</taxon>
    </lineage>
</organism>
<dbReference type="EC" id="4.1.1.32" evidence="1"/>
<dbReference type="EMBL" id="BX640427">
    <property type="protein sequence ID" value="CAE36670.1"/>
    <property type="molecule type" value="Genomic_DNA"/>
</dbReference>
<dbReference type="RefSeq" id="WP_010928001.1">
    <property type="nucleotide sequence ID" value="NC_002928.3"/>
</dbReference>
<dbReference type="SMR" id="Q7WAK8"/>
<dbReference type="GeneID" id="93203126"/>
<dbReference type="KEGG" id="bpa:BPP1368"/>
<dbReference type="HOGENOM" id="CLU_028872_1_1_4"/>
<dbReference type="UniPathway" id="UPA00138"/>
<dbReference type="Proteomes" id="UP000001421">
    <property type="component" value="Chromosome"/>
</dbReference>
<dbReference type="GO" id="GO:0005829">
    <property type="term" value="C:cytosol"/>
    <property type="evidence" value="ECO:0007669"/>
    <property type="project" value="TreeGrafter"/>
</dbReference>
<dbReference type="GO" id="GO:0005525">
    <property type="term" value="F:GTP binding"/>
    <property type="evidence" value="ECO:0007669"/>
    <property type="project" value="UniProtKB-UniRule"/>
</dbReference>
<dbReference type="GO" id="GO:0030145">
    <property type="term" value="F:manganese ion binding"/>
    <property type="evidence" value="ECO:0007669"/>
    <property type="project" value="UniProtKB-UniRule"/>
</dbReference>
<dbReference type="GO" id="GO:0004613">
    <property type="term" value="F:phosphoenolpyruvate carboxykinase (GTP) activity"/>
    <property type="evidence" value="ECO:0007669"/>
    <property type="project" value="UniProtKB-UniRule"/>
</dbReference>
<dbReference type="GO" id="GO:0071333">
    <property type="term" value="P:cellular response to glucose stimulus"/>
    <property type="evidence" value="ECO:0007669"/>
    <property type="project" value="TreeGrafter"/>
</dbReference>
<dbReference type="GO" id="GO:0006094">
    <property type="term" value="P:gluconeogenesis"/>
    <property type="evidence" value="ECO:0007669"/>
    <property type="project" value="UniProtKB-UniRule"/>
</dbReference>
<dbReference type="GO" id="GO:0046327">
    <property type="term" value="P:glycerol biosynthetic process from pyruvate"/>
    <property type="evidence" value="ECO:0007669"/>
    <property type="project" value="TreeGrafter"/>
</dbReference>
<dbReference type="GO" id="GO:0006107">
    <property type="term" value="P:oxaloacetate metabolic process"/>
    <property type="evidence" value="ECO:0007669"/>
    <property type="project" value="TreeGrafter"/>
</dbReference>
<dbReference type="GO" id="GO:0019543">
    <property type="term" value="P:propionate catabolic process"/>
    <property type="evidence" value="ECO:0007669"/>
    <property type="project" value="TreeGrafter"/>
</dbReference>
<dbReference type="GO" id="GO:0033993">
    <property type="term" value="P:response to lipid"/>
    <property type="evidence" value="ECO:0007669"/>
    <property type="project" value="TreeGrafter"/>
</dbReference>
<dbReference type="GO" id="GO:0042594">
    <property type="term" value="P:response to starvation"/>
    <property type="evidence" value="ECO:0007669"/>
    <property type="project" value="TreeGrafter"/>
</dbReference>
<dbReference type="CDD" id="cd00819">
    <property type="entry name" value="PEPCK_GTP"/>
    <property type="match status" value="1"/>
</dbReference>
<dbReference type="FunFam" id="3.40.449.10:FF:000005">
    <property type="entry name" value="Phosphoenolpyruvate carboxykinase [GTP]"/>
    <property type="match status" value="1"/>
</dbReference>
<dbReference type="Gene3D" id="3.90.228.20">
    <property type="match status" value="1"/>
</dbReference>
<dbReference type="Gene3D" id="3.40.449.10">
    <property type="entry name" value="Phosphoenolpyruvate Carboxykinase, domain 1"/>
    <property type="match status" value="1"/>
</dbReference>
<dbReference type="Gene3D" id="2.170.8.10">
    <property type="entry name" value="Phosphoenolpyruvate Carboxykinase, domain 2"/>
    <property type="match status" value="1"/>
</dbReference>
<dbReference type="HAMAP" id="MF_00452">
    <property type="entry name" value="PEPCK_GTP"/>
    <property type="match status" value="1"/>
</dbReference>
<dbReference type="InterPro" id="IPR018091">
    <property type="entry name" value="PEP_carboxykin_GTP_CS"/>
</dbReference>
<dbReference type="InterPro" id="IPR013035">
    <property type="entry name" value="PEP_carboxykinase_C"/>
</dbReference>
<dbReference type="InterPro" id="IPR008209">
    <property type="entry name" value="PEP_carboxykinase_GTP"/>
</dbReference>
<dbReference type="InterPro" id="IPR035077">
    <property type="entry name" value="PEP_carboxykinase_GTP_C"/>
</dbReference>
<dbReference type="InterPro" id="IPR035078">
    <property type="entry name" value="PEP_carboxykinase_GTP_N"/>
</dbReference>
<dbReference type="InterPro" id="IPR008210">
    <property type="entry name" value="PEP_carboxykinase_N"/>
</dbReference>
<dbReference type="NCBIfam" id="NF003253">
    <property type="entry name" value="PRK04210.1"/>
    <property type="match status" value="1"/>
</dbReference>
<dbReference type="PANTHER" id="PTHR11561">
    <property type="entry name" value="PHOSPHOENOLPYRUVATE CARBOXYKINASE"/>
    <property type="match status" value="1"/>
</dbReference>
<dbReference type="PANTHER" id="PTHR11561:SF0">
    <property type="entry name" value="PHOSPHOENOLPYRUVATE CARBOXYKINASE [GTP]-RELATED"/>
    <property type="match status" value="1"/>
</dbReference>
<dbReference type="Pfam" id="PF00821">
    <property type="entry name" value="PEPCK_GTP"/>
    <property type="match status" value="1"/>
</dbReference>
<dbReference type="Pfam" id="PF17297">
    <property type="entry name" value="PEPCK_N"/>
    <property type="match status" value="1"/>
</dbReference>
<dbReference type="PIRSF" id="PIRSF001348">
    <property type="entry name" value="PEP_carboxykinase_GTP"/>
    <property type="match status" value="1"/>
</dbReference>
<dbReference type="SUPFAM" id="SSF68923">
    <property type="entry name" value="PEP carboxykinase N-terminal domain"/>
    <property type="match status" value="1"/>
</dbReference>
<dbReference type="SUPFAM" id="SSF53795">
    <property type="entry name" value="PEP carboxykinase-like"/>
    <property type="match status" value="1"/>
</dbReference>
<dbReference type="PROSITE" id="PS00505">
    <property type="entry name" value="PEPCK_GTP"/>
    <property type="match status" value="1"/>
</dbReference>
<proteinExistence type="inferred from homology"/>
<protein>
    <recommendedName>
        <fullName evidence="1">Phosphoenolpyruvate carboxykinase [GTP]</fullName>
        <shortName evidence="1">PEP carboxykinase</shortName>
        <shortName evidence="1">PEPCK</shortName>
        <ecNumber evidence="1">4.1.1.32</ecNumber>
    </recommendedName>
</protein>
<gene>
    <name evidence="1" type="primary">pckG</name>
    <name type="synonym">pck</name>
    <name type="ordered locus">BPP1368</name>
</gene>
<name>PCKG_BORPA</name>
<feature type="chain" id="PRO_0000103591" description="Phosphoenolpyruvate carboxykinase [GTP]">
    <location>
        <begin position="1"/>
        <end position="618"/>
    </location>
</feature>
<feature type="active site" evidence="1">
    <location>
        <position position="277"/>
    </location>
</feature>
<feature type="binding site" evidence="1">
    <location>
        <position position="85"/>
    </location>
    <ligand>
        <name>substrate</name>
    </ligand>
</feature>
<feature type="binding site" evidence="1">
    <location>
        <begin position="224"/>
        <end position="226"/>
    </location>
    <ligand>
        <name>substrate</name>
    </ligand>
</feature>
<feature type="binding site" evidence="1">
    <location>
        <position position="233"/>
    </location>
    <ligand>
        <name>Mn(2+)</name>
        <dbReference type="ChEBI" id="CHEBI:29035"/>
    </ligand>
</feature>
<feature type="binding site" evidence="1">
    <location>
        <position position="253"/>
    </location>
    <ligand>
        <name>Mn(2+)</name>
        <dbReference type="ChEBI" id="CHEBI:29035"/>
    </ligand>
</feature>
<feature type="binding site" evidence="1">
    <location>
        <position position="275"/>
    </location>
    <ligand>
        <name>substrate</name>
    </ligand>
</feature>
<feature type="binding site" evidence="1">
    <location>
        <begin position="276"/>
        <end position="281"/>
    </location>
    <ligand>
        <name>GTP</name>
        <dbReference type="ChEBI" id="CHEBI:37565"/>
    </ligand>
</feature>
<feature type="binding site" evidence="1">
    <location>
        <position position="302"/>
    </location>
    <ligand>
        <name>Mn(2+)</name>
        <dbReference type="ChEBI" id="CHEBI:29035"/>
    </ligand>
</feature>
<feature type="binding site" evidence="1">
    <location>
        <begin position="396"/>
        <end position="398"/>
    </location>
    <ligand>
        <name>substrate</name>
    </ligand>
</feature>
<feature type="binding site" evidence="1">
    <location>
        <position position="398"/>
    </location>
    <ligand>
        <name>GTP</name>
        <dbReference type="ChEBI" id="CHEBI:37565"/>
    </ligand>
</feature>
<feature type="binding site" evidence="1">
    <location>
        <position position="429"/>
    </location>
    <ligand>
        <name>GTP</name>
        <dbReference type="ChEBI" id="CHEBI:37565"/>
    </ligand>
</feature>
<feature type="binding site" evidence="1">
    <location>
        <begin position="526"/>
        <end position="529"/>
    </location>
    <ligand>
        <name>GTP</name>
        <dbReference type="ChEBI" id="CHEBI:37565"/>
    </ligand>
</feature>
<keyword id="KW-0963">Cytoplasm</keyword>
<keyword id="KW-0210">Decarboxylase</keyword>
<keyword id="KW-0312">Gluconeogenesis</keyword>
<keyword id="KW-0342">GTP-binding</keyword>
<keyword id="KW-0456">Lyase</keyword>
<keyword id="KW-0464">Manganese</keyword>
<keyword id="KW-0479">Metal-binding</keyword>
<keyword id="KW-0547">Nucleotide-binding</keyword>
<comment type="function">
    <text evidence="1">Catalyzes the conversion of oxaloacetate (OAA) to phosphoenolpyruvate (PEP), the rate-limiting step in the metabolic pathway that produces glucose from lactate and other precursors derived from the citric acid cycle.</text>
</comment>
<comment type="catalytic activity">
    <reaction evidence="1">
        <text>oxaloacetate + GTP = phosphoenolpyruvate + GDP + CO2</text>
        <dbReference type="Rhea" id="RHEA:10388"/>
        <dbReference type="ChEBI" id="CHEBI:16452"/>
        <dbReference type="ChEBI" id="CHEBI:16526"/>
        <dbReference type="ChEBI" id="CHEBI:37565"/>
        <dbReference type="ChEBI" id="CHEBI:58189"/>
        <dbReference type="ChEBI" id="CHEBI:58702"/>
        <dbReference type="EC" id="4.1.1.32"/>
    </reaction>
</comment>
<comment type="cofactor">
    <cofactor evidence="1">
        <name>Mn(2+)</name>
        <dbReference type="ChEBI" id="CHEBI:29035"/>
    </cofactor>
    <text evidence="1">Binds 1 Mn(2+) ion per subunit.</text>
</comment>
<comment type="pathway">
    <text evidence="1">Carbohydrate biosynthesis; gluconeogenesis.</text>
</comment>
<comment type="subunit">
    <text evidence="1">Monomer.</text>
</comment>
<comment type="subcellular location">
    <subcellularLocation>
        <location evidence="1">Cytoplasm</location>
    </subcellularLocation>
</comment>
<comment type="similarity">
    <text evidence="1">Belongs to the phosphoenolpyruvate carboxykinase [GTP] family.</text>
</comment>
<reference key="1">
    <citation type="journal article" date="2003" name="Nat. Genet.">
        <title>Comparative analysis of the genome sequences of Bordetella pertussis, Bordetella parapertussis and Bordetella bronchiseptica.</title>
        <authorList>
            <person name="Parkhill J."/>
            <person name="Sebaihia M."/>
            <person name="Preston A."/>
            <person name="Murphy L.D."/>
            <person name="Thomson N.R."/>
            <person name="Harris D.E."/>
            <person name="Holden M.T.G."/>
            <person name="Churcher C.M."/>
            <person name="Bentley S.D."/>
            <person name="Mungall K.L."/>
            <person name="Cerdeno-Tarraga A.-M."/>
            <person name="Temple L."/>
            <person name="James K.D."/>
            <person name="Harris B."/>
            <person name="Quail M.A."/>
            <person name="Achtman M."/>
            <person name="Atkin R."/>
            <person name="Baker S."/>
            <person name="Basham D."/>
            <person name="Bason N."/>
            <person name="Cherevach I."/>
            <person name="Chillingworth T."/>
            <person name="Collins M."/>
            <person name="Cronin A."/>
            <person name="Davis P."/>
            <person name="Doggett J."/>
            <person name="Feltwell T."/>
            <person name="Goble A."/>
            <person name="Hamlin N."/>
            <person name="Hauser H."/>
            <person name="Holroyd S."/>
            <person name="Jagels K."/>
            <person name="Leather S."/>
            <person name="Moule S."/>
            <person name="Norberczak H."/>
            <person name="O'Neil S."/>
            <person name="Ormond D."/>
            <person name="Price C."/>
            <person name="Rabbinowitsch E."/>
            <person name="Rutter S."/>
            <person name="Sanders M."/>
            <person name="Saunders D."/>
            <person name="Seeger K."/>
            <person name="Sharp S."/>
            <person name="Simmonds M."/>
            <person name="Skelton J."/>
            <person name="Squares R."/>
            <person name="Squares S."/>
            <person name="Stevens K."/>
            <person name="Unwin L."/>
            <person name="Whitehead S."/>
            <person name="Barrell B.G."/>
            <person name="Maskell D.J."/>
        </authorList>
    </citation>
    <scope>NUCLEOTIDE SEQUENCE [LARGE SCALE GENOMIC DNA]</scope>
    <source>
        <strain>12822 / ATCC BAA-587 / NCTC 13253</strain>
    </source>
</reference>
<sequence length="618" mass="67985">MNKPSEVKPVALNVPDYVKHSGLIAWVERIAALTKPDRVVWCDGSQEEYDRLCEQMVQGGTMRRLNPAKRANSYLACSDPSDVARVEDRTFICSEREEDAGPTNNWAAPQAMRETLGGLFDGAMRGRTMYVVPFSMGPLGSPIAHIGVELSDSPYVVVNMRIMTRMGRKVFDVLGSDGAFVPCVHSVGMPLAEGQQDVAWPCNPTKYIVHYPETREIWSFGSGYGGNALLGKKCFALRIASTMGRDEGWLAEHMLILGVTSPKGRKYHVAAAFPSACGKTNFAMLIPPHGMDGWKVTTIGDDIAWIKPGPDGRLHAINPEAGYFGVAPGTSEKTNFNAMAMLKANVIFTNVALTDDGDVWWEGMTDTPPAHLIDWQGQDWTPAIAAETGRKAAHPNARFTAPAAQCPSIDPEWENPKGVAIDAFIFGGRRSTTVPLVTEARNWVEGVYMAATMGSETTAAAAGQQGVVRRDPFAMLPFCGYNMSDYFDHWLKLGRRLEETGATLPRIYCVNWFRKGPDGKFVWPGFGENMRVLRWMLGRLDGQAGGVDQVFGISPAYGDIDWTGLEFSPDKFEQVISVDLPAWRAELALHDELFTQLAARLPEDLPLTRTAIERRMAA</sequence>
<accession>Q7WAK8</accession>
<evidence type="ECO:0000255" key="1">
    <source>
        <dbReference type="HAMAP-Rule" id="MF_00452"/>
    </source>
</evidence>